<feature type="signal peptide" evidence="2">
    <location>
        <begin position="1"/>
        <end position="23"/>
    </location>
</feature>
<feature type="peptide" id="PRO_0000428693" description="Peptide Ctry2146">
    <location>
        <begin position="24"/>
        <end position="33"/>
    </location>
</feature>
<feature type="propeptide" id="PRO_0000428694" evidence="1">
    <location>
        <begin position="37"/>
        <end position="91"/>
    </location>
</feature>
<feature type="modified residue" description="Leucine amide" evidence="1">
    <location>
        <position position="33"/>
    </location>
</feature>
<proteinExistence type="inferred from homology"/>
<dbReference type="SMR" id="P0DMF1"/>
<dbReference type="GO" id="GO:0005576">
    <property type="term" value="C:extracellular region"/>
    <property type="evidence" value="ECO:0007669"/>
    <property type="project" value="UniProtKB-SubCell"/>
</dbReference>
<dbReference type="GO" id="GO:0016020">
    <property type="term" value="C:membrane"/>
    <property type="evidence" value="ECO:0007669"/>
    <property type="project" value="UniProtKB-KW"/>
</dbReference>
<dbReference type="GO" id="GO:0044218">
    <property type="term" value="C:other organism cell membrane"/>
    <property type="evidence" value="ECO:0007669"/>
    <property type="project" value="UniProtKB-KW"/>
</dbReference>
<dbReference type="GO" id="GO:0050688">
    <property type="term" value="P:regulation of defense response to virus"/>
    <property type="evidence" value="ECO:0007669"/>
    <property type="project" value="UniProtKB-KW"/>
</dbReference>
<accession>P0DMF1</accession>
<name>NDB4S_CHATY</name>
<reference key="1">
    <citation type="journal article" date="2013" name="Biomaterials">
        <title>Design of histidine-rich peptides with enhanced bioavailability and inhibitory activity against hepatitis C virus.</title>
        <authorList>
            <person name="Hong W."/>
            <person name="Zhang R."/>
            <person name="Di Z."/>
            <person name="He Y."/>
            <person name="Zhao Z."/>
            <person name="Hu J."/>
            <person name="Wu Y."/>
            <person name="Li W."/>
            <person name="Cao Z."/>
        </authorList>
    </citation>
    <scope>NUCLEOTIDE SEQUENCE [MRNA]</scope>
    <scope>SYNTHESIS OF 24-33</scope>
    <source>
        <tissue>Venom gland</tissue>
    </source>
</reference>
<comment type="function">
    <text evidence="1">Antimicrobial peptide.</text>
</comment>
<comment type="subcellular location">
    <subcellularLocation>
        <location evidence="1">Secreted</location>
    </subcellularLocation>
    <subcellularLocation>
        <location evidence="1">Target cell membrane</location>
    </subcellularLocation>
    <text evidence="1">Forms an alpha-helical membrane channel in the prey.</text>
</comment>
<comment type="tissue specificity">
    <text evidence="4">Expressed by the venom gland.</text>
</comment>
<comment type="miscellaneous">
    <text evidence="5">Shows a low ability to inhibit hepatitis C virus (HCV) infection in Huh7.5.1 cells.</text>
</comment>
<comment type="similarity">
    <text evidence="4">Belongs to the non-disulfide-bridged peptide (NDBP) superfamily. Short antimicrobial peptide (group 4) family.</text>
</comment>
<evidence type="ECO:0000250" key="1"/>
<evidence type="ECO:0000255" key="2"/>
<evidence type="ECO:0000303" key="3">
    <source>
    </source>
</evidence>
<evidence type="ECO:0000305" key="4"/>
<evidence type="ECO:0000305" key="5">
    <source>
    </source>
</evidence>
<keyword id="KW-0027">Amidation</keyword>
<keyword id="KW-0929">Antimicrobial</keyword>
<keyword id="KW-0930">Antiviral protein</keyword>
<keyword id="KW-0472">Membrane</keyword>
<keyword id="KW-0964">Secreted</keyword>
<keyword id="KW-0732">Signal</keyword>
<keyword id="KW-1052">Target cell membrane</keyword>
<keyword id="KW-1053">Target membrane</keyword>
<protein>
    <recommendedName>
        <fullName evidence="3">Peptide Ctry2146</fullName>
    </recommendedName>
</protein>
<sequence>MKTQTLLVTFLVVLLMVATQTEAGIADILKGLLGKRGLLDGLLGKRGLLFGKRGPLFGKRALTNQDFLDFAYDPSLSAADMDALEMLFEDY</sequence>
<organism>
    <name type="scientific">Chaerilus tryznai</name>
    <name type="common">Scorpion</name>
    <dbReference type="NCBI Taxonomy" id="1464547"/>
    <lineage>
        <taxon>Eukaryota</taxon>
        <taxon>Metazoa</taxon>
        <taxon>Ecdysozoa</taxon>
        <taxon>Arthropoda</taxon>
        <taxon>Chelicerata</taxon>
        <taxon>Arachnida</taxon>
        <taxon>Scorpiones</taxon>
        <taxon>Chaerilida</taxon>
        <taxon>Chaeriloidea</taxon>
        <taxon>Chaerilidae</taxon>
        <taxon>Chaerilus</taxon>
    </lineage>
</organism>